<reference key="1">
    <citation type="submission" date="2007-03" db="EMBL/GenBank/DDBJ databases">
        <title>Complete sequence of chromosome 1 of Burkholderia vietnamiensis G4.</title>
        <authorList>
            <consortium name="US DOE Joint Genome Institute"/>
            <person name="Copeland A."/>
            <person name="Lucas S."/>
            <person name="Lapidus A."/>
            <person name="Barry K."/>
            <person name="Detter J.C."/>
            <person name="Glavina del Rio T."/>
            <person name="Hammon N."/>
            <person name="Israni S."/>
            <person name="Dalin E."/>
            <person name="Tice H."/>
            <person name="Pitluck S."/>
            <person name="Chain P."/>
            <person name="Malfatti S."/>
            <person name="Shin M."/>
            <person name="Vergez L."/>
            <person name="Schmutz J."/>
            <person name="Larimer F."/>
            <person name="Land M."/>
            <person name="Hauser L."/>
            <person name="Kyrpides N."/>
            <person name="Tiedje J."/>
            <person name="Richardson P."/>
        </authorList>
    </citation>
    <scope>NUCLEOTIDE SEQUENCE [LARGE SCALE GENOMIC DNA]</scope>
    <source>
        <strain>G4 / LMG 22486</strain>
    </source>
</reference>
<name>Y1605_BURVG</name>
<evidence type="ECO:0000255" key="1">
    <source>
        <dbReference type="HAMAP-Rule" id="MF_00489"/>
    </source>
</evidence>
<organism>
    <name type="scientific">Burkholderia vietnamiensis (strain G4 / LMG 22486)</name>
    <name type="common">Burkholderia cepacia (strain R1808)</name>
    <dbReference type="NCBI Taxonomy" id="269482"/>
    <lineage>
        <taxon>Bacteria</taxon>
        <taxon>Pseudomonadati</taxon>
        <taxon>Pseudomonadota</taxon>
        <taxon>Betaproteobacteria</taxon>
        <taxon>Burkholderiales</taxon>
        <taxon>Burkholderiaceae</taxon>
        <taxon>Burkholderia</taxon>
        <taxon>Burkholderia cepacia complex</taxon>
    </lineage>
</organism>
<dbReference type="EMBL" id="CP000614">
    <property type="protein sequence ID" value="ABO54612.1"/>
    <property type="molecule type" value="Genomic_DNA"/>
</dbReference>
<dbReference type="KEGG" id="bvi:Bcep1808_1605"/>
<dbReference type="eggNOG" id="COG1671">
    <property type="taxonomic scope" value="Bacteria"/>
</dbReference>
<dbReference type="HOGENOM" id="CLU_106619_2_1_4"/>
<dbReference type="Proteomes" id="UP000002287">
    <property type="component" value="Chromosome 1"/>
</dbReference>
<dbReference type="CDD" id="cd18720">
    <property type="entry name" value="PIN_YqxD-like"/>
    <property type="match status" value="1"/>
</dbReference>
<dbReference type="HAMAP" id="MF_00489">
    <property type="entry name" value="UPF0178"/>
    <property type="match status" value="1"/>
</dbReference>
<dbReference type="InterPro" id="IPR003791">
    <property type="entry name" value="UPF0178"/>
</dbReference>
<dbReference type="NCBIfam" id="NF001095">
    <property type="entry name" value="PRK00124.1"/>
    <property type="match status" value="1"/>
</dbReference>
<dbReference type="PANTHER" id="PTHR35146">
    <property type="entry name" value="UPF0178 PROTEIN YAII"/>
    <property type="match status" value="1"/>
</dbReference>
<dbReference type="PANTHER" id="PTHR35146:SF1">
    <property type="entry name" value="UPF0178 PROTEIN YAII"/>
    <property type="match status" value="1"/>
</dbReference>
<dbReference type="Pfam" id="PF02639">
    <property type="entry name" value="DUF188"/>
    <property type="match status" value="1"/>
</dbReference>
<sequence length="150" mass="16245">MQIFVDADACPAVIKDMLFRVARRTGICVTLVANQFLRTPPSPHIKALQVPAGFDEADARIVELAQPGDLVVTADIPLAAALLDKGAHPLDPRGNWFSRENIDERLSTRAMMEQLRSAGIDTGGPAPFSARDANAFASQLDRFVARHGKP</sequence>
<protein>
    <recommendedName>
        <fullName evidence="1">UPF0178 protein Bcep1808_1605</fullName>
    </recommendedName>
</protein>
<gene>
    <name type="ordered locus">Bcep1808_1605</name>
</gene>
<accession>A4JEA9</accession>
<comment type="similarity">
    <text evidence="1">Belongs to the UPF0178 family.</text>
</comment>
<feature type="chain" id="PRO_1000014414" description="UPF0178 protein Bcep1808_1605">
    <location>
        <begin position="1"/>
        <end position="150"/>
    </location>
</feature>
<proteinExistence type="inferred from homology"/>